<sequence>MINNVSSLFPTVNRNITAVYKKSSFSVSPQKITLNPVKISSPFSPSSSSISATTLFRAPNAHSASFHRQSTAESSLHQQLPNVRQRLIQHLAEHGIKPARSMAEHIPPAPNWPAPPPPVQNEQSRPLPDVAQRLVQHLAEHGIQPARNMAEHIPPAPNWPAPPLPVQNEQSRPLPDVAQRLVQHLAEHGIQPARSMAEHIPPAPNWPAPPPPVQNEQSRPLPDVAQRLMQHLAEHGIQPARNMAEHIPPAPNWPAPTPPVQNEQSRPLPDVAQRLMQHLAEHGIQPARNMAEHIPPAPNWPAPTPPVQNEQSRPLPDVAQRLMQHLAEHGINTSKRS</sequence>
<name>ESPFU_ECO5T</name>
<keyword id="KW-1035">Host cytoplasm</keyword>
<keyword id="KW-0677">Repeat</keyword>
<keyword id="KW-0964">Secreted</keyword>
<keyword id="KW-0843">Virulence</keyword>
<reference key="1">
    <citation type="journal article" date="2009" name="Infect. Immun.">
        <title>Analysis of the genome of the Escherichia coli O157:H7 2006 spinach-associated outbreak isolate indicates candidate genes that may enhance virulence.</title>
        <authorList>
            <person name="Kulasekara B.R."/>
            <person name="Jacobs M."/>
            <person name="Zhou Y."/>
            <person name="Wu Z."/>
            <person name="Sims E."/>
            <person name="Saenphimmachak C."/>
            <person name="Rohmer L."/>
            <person name="Ritchie J.M."/>
            <person name="Radey M."/>
            <person name="McKevitt M."/>
            <person name="Freeman T.L."/>
            <person name="Hayden H."/>
            <person name="Haugen E."/>
            <person name="Gillett W."/>
            <person name="Fong C."/>
            <person name="Chang J."/>
            <person name="Beskhlebnaya V."/>
            <person name="Waldor M.K."/>
            <person name="Samadpour M."/>
            <person name="Whittam T.S."/>
            <person name="Kaul R."/>
            <person name="Brittnacher M."/>
            <person name="Miller S.I."/>
        </authorList>
    </citation>
    <scope>NUCLEOTIDE SEQUENCE [LARGE SCALE GENOMIC DNA]</scope>
    <source>
        <strain>TW14359 / EHEC</strain>
    </source>
</reference>
<evidence type="ECO:0000250" key="1"/>
<evidence type="ECO:0000256" key="2">
    <source>
        <dbReference type="SAM" id="MobiDB-lite"/>
    </source>
</evidence>
<evidence type="ECO:0000305" key="3"/>
<gene>
    <name type="primary">espF(U)</name>
    <name type="synonym">tccP</name>
    <name type="ordered locus">ECSP_2584</name>
</gene>
<comment type="function">
    <text evidence="1">Required for efficient pedestal formation in host epithelial cells during infection. Acts as an intermediate between Tir (via host BAIAP2) and host WASL/N-WASP. Directly binds and activates WASL/N-WASP, which stimulates actin polymerization and leads to the formation of actin pedestals at the sites of bacterial adhesion (By similarity).</text>
</comment>
<comment type="subunit">
    <text evidence="1">Interacts with host BAIAP2 and host WASL/N-WASP. Can also interact with host proteins BAIAP2L1 and WAS/WASP (By similarity).</text>
</comment>
<comment type="subcellular location">
    <subcellularLocation>
        <location evidence="1">Secreted</location>
    </subcellularLocation>
    <subcellularLocation>
        <location evidence="1">Host cytoplasm</location>
    </subcellularLocation>
    <text evidence="1">Secreted via the type III secretion system (T3SS). In host cells, localizes to the tip of the actin pedestal (By similarity).</text>
</comment>
<comment type="domain">
    <text evidence="1">The N-terminal 21 amino acids are necessary and sufficient for translocation into the host cell. The C-terminal region, composed of several highly conserved proline-rich repeats, interacts with the SH3 domain of BAIAP2 and BAIAP2L1, and the GTPase binding domain (GBD) of WASL/N-WASP and WAS/WASP. The N-terminal translocation signal and two proline-rich repeats are sufficient for triggering actin polymerization, but each additional repeat gives higher activity (By similarity).</text>
</comment>
<comment type="similarity">
    <text evidence="3">Belongs to the EspF(U)/TccP family.</text>
</comment>
<feature type="chain" id="PRO_0000413986" description="Secreted effector protein EspF(U)">
    <location>
        <begin position="1"/>
        <end position="337"/>
    </location>
</feature>
<feature type="repeat" description="1">
    <location>
        <begin position="96"/>
        <end position="142"/>
    </location>
</feature>
<feature type="repeat" description="2">
    <location>
        <begin position="143"/>
        <end position="189"/>
    </location>
</feature>
<feature type="repeat" description="3">
    <location>
        <begin position="190"/>
        <end position="236"/>
    </location>
</feature>
<feature type="repeat" description="4">
    <location>
        <begin position="237"/>
        <end position="283"/>
    </location>
</feature>
<feature type="repeat" description="5">
    <location>
        <begin position="284"/>
        <end position="330"/>
    </location>
</feature>
<feature type="region of interest" description="5 X 48 AA approximate tandem repeats">
    <location>
        <begin position="96"/>
        <end position="330"/>
    </location>
</feature>
<feature type="region of interest" description="Disordered" evidence="2">
    <location>
        <begin position="291"/>
        <end position="312"/>
    </location>
</feature>
<feature type="compositionally biased region" description="Pro residues" evidence="2">
    <location>
        <begin position="295"/>
        <end position="306"/>
    </location>
</feature>
<protein>
    <recommendedName>
        <fullName>Secreted effector protein EspF(U)</fullName>
    </recommendedName>
    <alternativeName>
        <fullName>EspF-like protein encoded on prophage U</fullName>
    </alternativeName>
    <alternativeName>
        <fullName>Tir-cytoskeleton coupling protein TccP</fullName>
    </alternativeName>
</protein>
<organism>
    <name type="scientific">Escherichia coli O157:H7 (strain TW14359 / EHEC)</name>
    <dbReference type="NCBI Taxonomy" id="544404"/>
    <lineage>
        <taxon>Bacteria</taxon>
        <taxon>Pseudomonadati</taxon>
        <taxon>Pseudomonadota</taxon>
        <taxon>Gammaproteobacteria</taxon>
        <taxon>Enterobacterales</taxon>
        <taxon>Enterobacteriaceae</taxon>
        <taxon>Escherichia</taxon>
    </lineage>
</organism>
<accession>C6UYI3</accession>
<proteinExistence type="inferred from homology"/>
<dbReference type="EMBL" id="CP001368">
    <property type="protein sequence ID" value="ACT72391.1"/>
    <property type="molecule type" value="Genomic_DNA"/>
</dbReference>
<dbReference type="RefSeq" id="WP_010917831.1">
    <property type="nucleotide sequence ID" value="NC_013008.1"/>
</dbReference>
<dbReference type="SMR" id="C6UYI3"/>
<dbReference type="KEGG" id="etw:ECSP_2584"/>
<dbReference type="HOGENOM" id="CLU_936086_0_0_6"/>
<dbReference type="GO" id="GO:0005576">
    <property type="term" value="C:extracellular region"/>
    <property type="evidence" value="ECO:0007669"/>
    <property type="project" value="UniProtKB-SubCell"/>
</dbReference>
<dbReference type="GO" id="GO:0030430">
    <property type="term" value="C:host cell cytoplasm"/>
    <property type="evidence" value="ECO:0000250"/>
    <property type="project" value="UniProtKB"/>
</dbReference>
<dbReference type="FunFam" id="6.10.250.3330:FF:000001">
    <property type="entry name" value="Secreted effector protein EspF(U)"/>
    <property type="match status" value="4"/>
</dbReference>
<dbReference type="Gene3D" id="6.10.250.3330">
    <property type="entry name" value="TccP2/EspF(U)-like"/>
    <property type="match status" value="6"/>
</dbReference>
<dbReference type="InterPro" id="IPR006891">
    <property type="entry name" value="T3SS_EspF"/>
</dbReference>
<dbReference type="InterPro" id="IPR044889">
    <property type="entry name" value="TccP2/EspF(U)-like_sf"/>
</dbReference>
<dbReference type="Pfam" id="PF04806">
    <property type="entry name" value="EspF"/>
    <property type="match status" value="6"/>
</dbReference>